<gene>
    <name evidence="2" type="primary">cysN</name>
    <name type="ordered locus">ECIAI39_2940</name>
</gene>
<evidence type="ECO:0000250" key="1"/>
<evidence type="ECO:0000255" key="2">
    <source>
        <dbReference type="HAMAP-Rule" id="MF_00062"/>
    </source>
</evidence>
<feature type="chain" id="PRO_1000116938" description="Sulfate adenylyltransferase subunit 1">
    <location>
        <begin position="1"/>
        <end position="475"/>
    </location>
</feature>
<feature type="domain" description="tr-type G">
    <location>
        <begin position="25"/>
        <end position="239"/>
    </location>
</feature>
<feature type="region of interest" description="G1" evidence="1">
    <location>
        <begin position="34"/>
        <end position="41"/>
    </location>
</feature>
<feature type="region of interest" description="G2" evidence="1">
    <location>
        <begin position="92"/>
        <end position="96"/>
    </location>
</feature>
<feature type="region of interest" description="G3" evidence="1">
    <location>
        <begin position="113"/>
        <end position="116"/>
    </location>
</feature>
<feature type="region of interest" description="G4" evidence="1">
    <location>
        <begin position="168"/>
        <end position="171"/>
    </location>
</feature>
<feature type="region of interest" description="G5" evidence="1">
    <location>
        <begin position="206"/>
        <end position="208"/>
    </location>
</feature>
<feature type="binding site" evidence="2">
    <location>
        <begin position="34"/>
        <end position="41"/>
    </location>
    <ligand>
        <name>GTP</name>
        <dbReference type="ChEBI" id="CHEBI:37565"/>
    </ligand>
</feature>
<feature type="binding site" evidence="2">
    <location>
        <begin position="113"/>
        <end position="117"/>
    </location>
    <ligand>
        <name>GTP</name>
        <dbReference type="ChEBI" id="CHEBI:37565"/>
    </ligand>
</feature>
<feature type="binding site" evidence="2">
    <location>
        <begin position="168"/>
        <end position="171"/>
    </location>
    <ligand>
        <name>GTP</name>
        <dbReference type="ChEBI" id="CHEBI:37565"/>
    </ligand>
</feature>
<comment type="function">
    <text evidence="2">With CysD forms the ATP sulfurylase (ATPS) that catalyzes the adenylation of sulfate producing adenosine 5'-phosphosulfate (APS) and diphosphate, the first enzymatic step in sulfur assimilation pathway. APS synthesis involves the formation of a high-energy phosphoric-sulfuric acid anhydride bond driven by GTP hydrolysis by CysN coupled to ATP hydrolysis by CysD.</text>
</comment>
<comment type="catalytic activity">
    <reaction evidence="2">
        <text>sulfate + ATP + H(+) = adenosine 5'-phosphosulfate + diphosphate</text>
        <dbReference type="Rhea" id="RHEA:18133"/>
        <dbReference type="ChEBI" id="CHEBI:15378"/>
        <dbReference type="ChEBI" id="CHEBI:16189"/>
        <dbReference type="ChEBI" id="CHEBI:30616"/>
        <dbReference type="ChEBI" id="CHEBI:33019"/>
        <dbReference type="ChEBI" id="CHEBI:58243"/>
        <dbReference type="EC" id="2.7.7.4"/>
    </reaction>
</comment>
<comment type="pathway">
    <text evidence="2">Sulfur metabolism; hydrogen sulfide biosynthesis; sulfite from sulfate: step 1/3.</text>
</comment>
<comment type="subunit">
    <text evidence="2">Heterodimer composed of CysD, the smaller subunit, and CysN.</text>
</comment>
<comment type="similarity">
    <text evidence="2">Belongs to the TRAFAC class translation factor GTPase superfamily. Classic translation factor GTPase family. CysN/NodQ subfamily.</text>
</comment>
<organism>
    <name type="scientific">Escherichia coli O7:K1 (strain IAI39 / ExPEC)</name>
    <dbReference type="NCBI Taxonomy" id="585057"/>
    <lineage>
        <taxon>Bacteria</taxon>
        <taxon>Pseudomonadati</taxon>
        <taxon>Pseudomonadota</taxon>
        <taxon>Gammaproteobacteria</taxon>
        <taxon>Enterobacterales</taxon>
        <taxon>Enterobacteriaceae</taxon>
        <taxon>Escherichia</taxon>
    </lineage>
</organism>
<dbReference type="EC" id="2.7.7.4" evidence="2"/>
<dbReference type="EMBL" id="CU928164">
    <property type="protein sequence ID" value="CAR19059.1"/>
    <property type="molecule type" value="Genomic_DNA"/>
</dbReference>
<dbReference type="RefSeq" id="WP_001090361.1">
    <property type="nucleotide sequence ID" value="NC_011750.1"/>
</dbReference>
<dbReference type="RefSeq" id="YP_002408871.1">
    <property type="nucleotide sequence ID" value="NC_011750.1"/>
</dbReference>
<dbReference type="SMR" id="B7NT95"/>
<dbReference type="STRING" id="585057.ECIAI39_2940"/>
<dbReference type="GeneID" id="93779255"/>
<dbReference type="KEGG" id="ect:ECIAI39_2940"/>
<dbReference type="PATRIC" id="fig|585057.6.peg.3049"/>
<dbReference type="HOGENOM" id="CLU_007265_5_2_6"/>
<dbReference type="UniPathway" id="UPA00140">
    <property type="reaction ID" value="UER00204"/>
</dbReference>
<dbReference type="Proteomes" id="UP000000749">
    <property type="component" value="Chromosome"/>
</dbReference>
<dbReference type="GO" id="GO:0005524">
    <property type="term" value="F:ATP binding"/>
    <property type="evidence" value="ECO:0007669"/>
    <property type="project" value="UniProtKB-KW"/>
</dbReference>
<dbReference type="GO" id="GO:0005525">
    <property type="term" value="F:GTP binding"/>
    <property type="evidence" value="ECO:0007669"/>
    <property type="project" value="UniProtKB-UniRule"/>
</dbReference>
<dbReference type="GO" id="GO:0003924">
    <property type="term" value="F:GTPase activity"/>
    <property type="evidence" value="ECO:0007669"/>
    <property type="project" value="InterPro"/>
</dbReference>
<dbReference type="GO" id="GO:0004781">
    <property type="term" value="F:sulfate adenylyltransferase (ATP) activity"/>
    <property type="evidence" value="ECO:0007669"/>
    <property type="project" value="UniProtKB-UniRule"/>
</dbReference>
<dbReference type="GO" id="GO:0070814">
    <property type="term" value="P:hydrogen sulfide biosynthetic process"/>
    <property type="evidence" value="ECO:0007669"/>
    <property type="project" value="UniProtKB-UniRule"/>
</dbReference>
<dbReference type="GO" id="GO:0000103">
    <property type="term" value="P:sulfate assimilation"/>
    <property type="evidence" value="ECO:0007669"/>
    <property type="project" value="UniProtKB-UniRule"/>
</dbReference>
<dbReference type="CDD" id="cd04166">
    <property type="entry name" value="CysN_ATPS"/>
    <property type="match status" value="1"/>
</dbReference>
<dbReference type="CDD" id="cd03695">
    <property type="entry name" value="CysN_NodQ_II"/>
    <property type="match status" value="1"/>
</dbReference>
<dbReference type="CDD" id="cd04095">
    <property type="entry name" value="CysN_NoDQ_III"/>
    <property type="match status" value="1"/>
</dbReference>
<dbReference type="FunFam" id="2.40.30.10:FF:000027">
    <property type="entry name" value="Sulfate adenylyltransferase subunit 1"/>
    <property type="match status" value="1"/>
</dbReference>
<dbReference type="FunFam" id="2.40.30.10:FF:000031">
    <property type="entry name" value="Sulfate adenylyltransferase subunit 1"/>
    <property type="match status" value="1"/>
</dbReference>
<dbReference type="FunFam" id="3.40.50.300:FF:000119">
    <property type="entry name" value="Sulfate adenylyltransferase subunit 1"/>
    <property type="match status" value="1"/>
</dbReference>
<dbReference type="Gene3D" id="3.40.50.300">
    <property type="entry name" value="P-loop containing nucleotide triphosphate hydrolases"/>
    <property type="match status" value="1"/>
</dbReference>
<dbReference type="Gene3D" id="2.40.30.10">
    <property type="entry name" value="Translation factors"/>
    <property type="match status" value="2"/>
</dbReference>
<dbReference type="HAMAP" id="MF_00062">
    <property type="entry name" value="Sulf_adenylyltr_sub1"/>
    <property type="match status" value="1"/>
</dbReference>
<dbReference type="InterPro" id="IPR041757">
    <property type="entry name" value="CysN_GTP-bd"/>
</dbReference>
<dbReference type="InterPro" id="IPR044138">
    <property type="entry name" value="CysN_II"/>
</dbReference>
<dbReference type="InterPro" id="IPR044139">
    <property type="entry name" value="CysN_NoDQ_III"/>
</dbReference>
<dbReference type="InterPro" id="IPR031157">
    <property type="entry name" value="G_TR_CS"/>
</dbReference>
<dbReference type="InterPro" id="IPR054696">
    <property type="entry name" value="GTP-eEF1A_C"/>
</dbReference>
<dbReference type="InterPro" id="IPR027417">
    <property type="entry name" value="P-loop_NTPase"/>
</dbReference>
<dbReference type="InterPro" id="IPR005225">
    <property type="entry name" value="Small_GTP-bd"/>
</dbReference>
<dbReference type="InterPro" id="IPR011779">
    <property type="entry name" value="SO4_adenylTrfase_lsu"/>
</dbReference>
<dbReference type="InterPro" id="IPR000795">
    <property type="entry name" value="T_Tr_GTP-bd_dom"/>
</dbReference>
<dbReference type="InterPro" id="IPR050100">
    <property type="entry name" value="TRAFAC_GTPase_members"/>
</dbReference>
<dbReference type="InterPro" id="IPR009000">
    <property type="entry name" value="Transl_B-barrel_sf"/>
</dbReference>
<dbReference type="InterPro" id="IPR009001">
    <property type="entry name" value="Transl_elong_EF1A/Init_IF2_C"/>
</dbReference>
<dbReference type="NCBIfam" id="TIGR02034">
    <property type="entry name" value="CysN"/>
    <property type="match status" value="1"/>
</dbReference>
<dbReference type="NCBIfam" id="NF003478">
    <property type="entry name" value="PRK05124.1"/>
    <property type="match status" value="1"/>
</dbReference>
<dbReference type="NCBIfam" id="TIGR00231">
    <property type="entry name" value="small_GTP"/>
    <property type="match status" value="1"/>
</dbReference>
<dbReference type="PANTHER" id="PTHR23115">
    <property type="entry name" value="TRANSLATION FACTOR"/>
    <property type="match status" value="1"/>
</dbReference>
<dbReference type="Pfam" id="PF22594">
    <property type="entry name" value="GTP-eEF1A_C"/>
    <property type="match status" value="1"/>
</dbReference>
<dbReference type="Pfam" id="PF00009">
    <property type="entry name" value="GTP_EFTU"/>
    <property type="match status" value="1"/>
</dbReference>
<dbReference type="PRINTS" id="PR00315">
    <property type="entry name" value="ELONGATNFCT"/>
</dbReference>
<dbReference type="SUPFAM" id="SSF50465">
    <property type="entry name" value="EF-Tu/eEF-1alpha/eIF2-gamma C-terminal domain"/>
    <property type="match status" value="1"/>
</dbReference>
<dbReference type="SUPFAM" id="SSF52540">
    <property type="entry name" value="P-loop containing nucleoside triphosphate hydrolases"/>
    <property type="match status" value="1"/>
</dbReference>
<dbReference type="SUPFAM" id="SSF50447">
    <property type="entry name" value="Translation proteins"/>
    <property type="match status" value="1"/>
</dbReference>
<dbReference type="PROSITE" id="PS00301">
    <property type="entry name" value="G_TR_1"/>
    <property type="match status" value="1"/>
</dbReference>
<dbReference type="PROSITE" id="PS51722">
    <property type="entry name" value="G_TR_2"/>
    <property type="match status" value="1"/>
</dbReference>
<accession>B7NT95</accession>
<name>CYSN_ECO7I</name>
<keyword id="KW-0067">ATP-binding</keyword>
<keyword id="KW-0342">GTP-binding</keyword>
<keyword id="KW-0547">Nucleotide-binding</keyword>
<keyword id="KW-0548">Nucleotidyltransferase</keyword>
<keyword id="KW-0808">Transferase</keyword>
<sequence>MNTALAQQIANEGGVEAWMIAQQHKSLLRFLTCGSVDDGKSTLIGRLLHDTRQIYEDQLSSLHNDSKRHGTQGEKLDLALLVDGLQAEREQGITIDVAYRYFSTEKRKFIIADTPGHEQYTRNMATGASTCELAILLIDARKGVLDQTRRHSFISTLLGIKHLVVAINKMDLVDYSEETFTRIREDYLTFAGQLPGNLDIRFVPLSALEGDNVASQSESMPWYSGPTLLEVLETVEIQRVVDAQPMRFPVQYVNRPNLDFRGYAGTLASGRVEVGQRVKVLPSGVESNVARIVTFDGDREEAFAGEAITLVLTDEIDISRGDLLLAADEALPAVQSASVDVVWMAEQPLSPGQSYDIKIAGKKTRARVDGIRYQVDINNLTQREVENLPLNGIGLVDLTFDEPLVLDRYQQNPVTGGLIFIDRLSNVTVGAGMVHEPVSQATAAPSEFSAFELELNALVRRHFPHWGARDLLGDK</sequence>
<proteinExistence type="inferred from homology"/>
<protein>
    <recommendedName>
        <fullName evidence="2">Sulfate adenylyltransferase subunit 1</fullName>
        <ecNumber evidence="2">2.7.7.4</ecNumber>
    </recommendedName>
    <alternativeName>
        <fullName evidence="2">ATP-sulfurylase large subunit</fullName>
    </alternativeName>
    <alternativeName>
        <fullName evidence="2">Sulfate adenylate transferase</fullName>
        <shortName evidence="2">SAT</shortName>
    </alternativeName>
</protein>
<reference key="1">
    <citation type="journal article" date="2009" name="PLoS Genet.">
        <title>Organised genome dynamics in the Escherichia coli species results in highly diverse adaptive paths.</title>
        <authorList>
            <person name="Touchon M."/>
            <person name="Hoede C."/>
            <person name="Tenaillon O."/>
            <person name="Barbe V."/>
            <person name="Baeriswyl S."/>
            <person name="Bidet P."/>
            <person name="Bingen E."/>
            <person name="Bonacorsi S."/>
            <person name="Bouchier C."/>
            <person name="Bouvet O."/>
            <person name="Calteau A."/>
            <person name="Chiapello H."/>
            <person name="Clermont O."/>
            <person name="Cruveiller S."/>
            <person name="Danchin A."/>
            <person name="Diard M."/>
            <person name="Dossat C."/>
            <person name="Karoui M.E."/>
            <person name="Frapy E."/>
            <person name="Garry L."/>
            <person name="Ghigo J.M."/>
            <person name="Gilles A.M."/>
            <person name="Johnson J."/>
            <person name="Le Bouguenec C."/>
            <person name="Lescat M."/>
            <person name="Mangenot S."/>
            <person name="Martinez-Jehanne V."/>
            <person name="Matic I."/>
            <person name="Nassif X."/>
            <person name="Oztas S."/>
            <person name="Petit M.A."/>
            <person name="Pichon C."/>
            <person name="Rouy Z."/>
            <person name="Ruf C.S."/>
            <person name="Schneider D."/>
            <person name="Tourret J."/>
            <person name="Vacherie B."/>
            <person name="Vallenet D."/>
            <person name="Medigue C."/>
            <person name="Rocha E.P.C."/>
            <person name="Denamur E."/>
        </authorList>
    </citation>
    <scope>NUCLEOTIDE SEQUENCE [LARGE SCALE GENOMIC DNA]</scope>
    <source>
        <strain>IAI39 / ExPEC</strain>
    </source>
</reference>